<evidence type="ECO:0000255" key="1">
    <source>
        <dbReference type="HAMAP-Rule" id="MF_04076"/>
    </source>
</evidence>
<evidence type="ECO:0000256" key="2">
    <source>
        <dbReference type="SAM" id="MobiDB-lite"/>
    </source>
</evidence>
<reference key="1">
    <citation type="journal article" date="1992" name="Nucleic Acids Res.">
        <title>The complete nucleotide sequence of hepatitis B virus, subtype adr (SRADR) and phylogenetic analysis.</title>
        <authorList>
            <person name="Mukaide M."/>
        </authorList>
    </citation>
    <scope>NUCLEOTIDE SEQUENCE [GENOMIC DNA]</scope>
</reference>
<accession>Q81164</accession>
<proteinExistence type="inferred from homology"/>
<dbReference type="EMBL" id="D16665">
    <property type="protein sequence ID" value="BAA04071.1"/>
    <property type="molecule type" value="Genomic_DNA"/>
</dbReference>
<dbReference type="SMR" id="Q81164"/>
<dbReference type="Proteomes" id="UP000007926">
    <property type="component" value="Genome"/>
</dbReference>
<dbReference type="GO" id="GO:0043657">
    <property type="term" value="C:host cell"/>
    <property type="evidence" value="ECO:0007669"/>
    <property type="project" value="GOC"/>
</dbReference>
<dbReference type="GO" id="GO:0030430">
    <property type="term" value="C:host cell cytoplasm"/>
    <property type="evidence" value="ECO:0007669"/>
    <property type="project" value="UniProtKB-SubCell"/>
</dbReference>
<dbReference type="GO" id="GO:0039619">
    <property type="term" value="C:T=4 icosahedral viral capsid"/>
    <property type="evidence" value="ECO:0007669"/>
    <property type="project" value="UniProtKB-UniRule"/>
</dbReference>
<dbReference type="GO" id="GO:0003677">
    <property type="term" value="F:DNA binding"/>
    <property type="evidence" value="ECO:0007669"/>
    <property type="project" value="UniProtKB-UniRule"/>
</dbReference>
<dbReference type="GO" id="GO:0003723">
    <property type="term" value="F:RNA binding"/>
    <property type="evidence" value="ECO:0007669"/>
    <property type="project" value="UniProtKB-UniRule"/>
</dbReference>
<dbReference type="GO" id="GO:0005198">
    <property type="term" value="F:structural molecule activity"/>
    <property type="evidence" value="ECO:0007669"/>
    <property type="project" value="UniProtKB-UniRule"/>
</dbReference>
<dbReference type="GO" id="GO:0075521">
    <property type="term" value="P:microtubule-dependent intracellular transport of viral material towards nucleus"/>
    <property type="evidence" value="ECO:0007669"/>
    <property type="project" value="UniProtKB-UniRule"/>
</dbReference>
<dbReference type="GO" id="GO:0046718">
    <property type="term" value="P:symbiont entry into host cell"/>
    <property type="evidence" value="ECO:0007669"/>
    <property type="project" value="UniProtKB-UniRule"/>
</dbReference>
<dbReference type="GO" id="GO:0075732">
    <property type="term" value="P:viral penetration into host nucleus"/>
    <property type="evidence" value="ECO:0007669"/>
    <property type="project" value="UniProtKB-UniRule"/>
</dbReference>
<dbReference type="FunFam" id="1.10.4090.10:FF:000001">
    <property type="entry name" value="Capsid protein"/>
    <property type="match status" value="1"/>
</dbReference>
<dbReference type="Gene3D" id="1.10.4090.10">
    <property type="entry name" value="Viral capsid, core domain supefamily, Hepatitis B virus"/>
    <property type="match status" value="1"/>
</dbReference>
<dbReference type="HAMAP" id="MF_04076">
    <property type="entry name" value="HBV_HBEAG"/>
    <property type="match status" value="1"/>
</dbReference>
<dbReference type="InterPro" id="IPR002006">
    <property type="entry name" value="Hepatitis_core"/>
</dbReference>
<dbReference type="InterPro" id="IPR036459">
    <property type="entry name" value="Viral_capsid_core_dom_sf_HBV"/>
</dbReference>
<dbReference type="Pfam" id="PF00906">
    <property type="entry name" value="Hepatitis_core"/>
    <property type="match status" value="3"/>
</dbReference>
<dbReference type="SUPFAM" id="SSF47852">
    <property type="entry name" value="Hepatitis B viral capsid (hbcag)"/>
    <property type="match status" value="1"/>
</dbReference>
<organismHost>
    <name type="scientific">Homo sapiens</name>
    <name type="common">Human</name>
    <dbReference type="NCBI Taxonomy" id="9606"/>
</organismHost>
<organismHost>
    <name type="scientific">Pan troglodytes</name>
    <name type="common">Chimpanzee</name>
    <dbReference type="NCBI Taxonomy" id="9598"/>
</organismHost>
<gene>
    <name evidence="1" type="primary">C</name>
</gene>
<name>CAPSD_HBVC8</name>
<comment type="function">
    <text evidence="1">Self assembles to form an icosahedral capsid. Most capsids appear to be large particles with an icosahedral symmetry of T=4 and consist of 240 copies of capsid protein, though a fraction forms smaller T=3 particles consisting of 180 capsid proteins. Entering capsids are transported along microtubules to the nucleus. Phosphorylation of the capsid is thought to induce exposure of nuclear localization signal in the C-terminal portion of the capsid protein that allows binding to the nuclear pore complex via the importin (karyopherin-) alpha and beta. Capsids are imported in intact form through the nuclear pore into the nuclear basket, where it probably binds NUP153. Only capsids that contain the mature viral genome can release the viral DNA and capsid protein into the nucleoplasm. Immature capsids get stuck in the basket. Capsids encapsulate the pre-genomic RNA and the P protein. Pre-genomic RNA is reverse-transcribed into DNA while the capsid is still in the cytoplasm. The capsid can then either be directed to the nucleus, providing more genomes for transcription, or bud through the endoplasmic reticulum to provide new virions.</text>
</comment>
<comment type="subunit">
    <text evidence="1">Homodimerizes, then multimerizes. Interacts with cytosol exposed regions of viral L glycoprotein present in the reticulum-to-Golgi compartment. Interacts with human FLNB. Phosphorylated form interacts with host importin alpha; this interaction depends on the exposure of the NLS, which itself depends upon genome maturation and/or phosphorylation of the capsid protein. Interacts with host NUP153.</text>
</comment>
<comment type="subcellular location">
    <subcellularLocation>
        <location evidence="1">Virion</location>
    </subcellularLocation>
    <subcellularLocation>
        <location evidence="1">Host cytoplasm</location>
    </subcellularLocation>
</comment>
<comment type="PTM">
    <text evidence="1">Phosphorylated by host SRPK1, SRPK2, and maybe protein kinase C or GAPDH. Phosphorylation is critical for pregenomic RNA packaging. Protein kinase C phosphorylation is stimulated by HBx protein and may play a role in transport of the viral genome to the nucleus at the late step during the viral replication cycle.</text>
</comment>
<comment type="similarity">
    <text evidence="1">Belongs to the orthohepadnavirus core antigen family.</text>
</comment>
<feature type="chain" id="PRO_0000324367" description="Capsid protein">
    <location>
        <begin position="1"/>
        <end position="183"/>
    </location>
</feature>
<feature type="repeat" description="1; half-length">
    <location>
        <begin position="155"/>
        <end position="161"/>
    </location>
</feature>
<feature type="repeat" description="2">
    <location>
        <begin position="162"/>
        <end position="169"/>
    </location>
</feature>
<feature type="repeat" description="3">
    <location>
        <begin position="170"/>
        <end position="177"/>
    </location>
</feature>
<feature type="region of interest" description="Disordered" evidence="2">
    <location>
        <begin position="136"/>
        <end position="183"/>
    </location>
</feature>
<feature type="region of interest" description="3 X 8 AA repeats of S-P-R-R-R-[PR]-S-Q">
    <location>
        <begin position="155"/>
        <end position="177"/>
    </location>
</feature>
<feature type="region of interest" description="RNA binding" evidence="1">
    <location>
        <begin position="177"/>
        <end position="183"/>
    </location>
</feature>
<feature type="short sequence motif" description="Bipartite nuclear localization signal" evidence="1">
    <location>
        <begin position="158"/>
        <end position="175"/>
    </location>
</feature>
<feature type="compositionally biased region" description="Basic residues" evidence="2">
    <location>
        <begin position="149"/>
        <end position="176"/>
    </location>
</feature>
<feature type="modified residue" description="Phosphoserine; by host" evidence="1">
    <location>
        <position position="155"/>
    </location>
</feature>
<feature type="modified residue" description="Phosphoserine; by host" evidence="1">
    <location>
        <position position="162"/>
    </location>
</feature>
<feature type="modified residue" description="Phosphoserine; by host" evidence="1">
    <location>
        <position position="170"/>
    </location>
</feature>
<sequence length="183" mass="21051">MDIDPYKEFGATVELLSFLPSDFFPSVRDLLDTAAALYREALESPEHCSPHHTALRQAILCWVELMTLATWVGNNLEDPASRDLVVNYVNTNMGLKIRQLLWFHISCLTFGRETVLEYLVSFGVWIGTPPAYRPPNAPILSTLPETTVVRRRGRSPRRRTPSPRRRRSQSPRRRRSQSRESQC</sequence>
<organism>
    <name type="scientific">Hepatitis B virus genotype C subtype adr (isolate Japan/A4/1994)</name>
    <name type="common">HBV-C</name>
    <dbReference type="NCBI Taxonomy" id="489470"/>
    <lineage>
        <taxon>Viruses</taxon>
        <taxon>Riboviria</taxon>
        <taxon>Pararnavirae</taxon>
        <taxon>Artverviricota</taxon>
        <taxon>Revtraviricetes</taxon>
        <taxon>Blubervirales</taxon>
        <taxon>Hepadnaviridae</taxon>
        <taxon>Orthohepadnavirus</taxon>
        <taxon>Hepatitis B virus</taxon>
        <taxon>hepatitis B virus genotype C</taxon>
    </lineage>
</organism>
<protein>
    <recommendedName>
        <fullName evidence="1">Capsid protein</fullName>
    </recommendedName>
    <alternativeName>
        <fullName evidence="1">Core antigen</fullName>
    </alternativeName>
    <alternativeName>
        <fullName evidence="1">Core protein</fullName>
    </alternativeName>
    <alternativeName>
        <fullName evidence="1">HBcAg</fullName>
    </alternativeName>
    <alternativeName>
        <fullName evidence="1">p21.5</fullName>
    </alternativeName>
</protein>
<keyword id="KW-0167">Capsid protein</keyword>
<keyword id="KW-1176">Cytoplasmic inwards viral transport</keyword>
<keyword id="KW-0238">DNA-binding</keyword>
<keyword id="KW-1035">Host cytoplasm</keyword>
<keyword id="KW-0945">Host-virus interaction</keyword>
<keyword id="KW-1177">Microtubular inwards viral transport</keyword>
<keyword id="KW-0597">Phosphoprotein</keyword>
<keyword id="KW-0677">Repeat</keyword>
<keyword id="KW-0694">RNA-binding</keyword>
<keyword id="KW-1144">T=4 icosahedral capsid protein</keyword>
<keyword id="KW-1163">Viral penetration into host nucleus</keyword>
<keyword id="KW-0946">Virion</keyword>
<keyword id="KW-1160">Virus entry into host cell</keyword>